<proteinExistence type="inferred from homology"/>
<evidence type="ECO:0000255" key="1">
    <source>
        <dbReference type="HAMAP-Rule" id="MF_00008"/>
    </source>
</evidence>
<reference key="1">
    <citation type="submission" date="2009-03" db="EMBL/GenBank/DDBJ databases">
        <title>Complete genome sequence of Edwardsiella ictaluri 93-146.</title>
        <authorList>
            <person name="Williams M.L."/>
            <person name="Gillaspy A.F."/>
            <person name="Dyer D.W."/>
            <person name="Thune R.L."/>
            <person name="Waldbieser G.C."/>
            <person name="Schuster S.C."/>
            <person name="Gipson J."/>
            <person name="Zaitshik J."/>
            <person name="Landry C."/>
            <person name="Lawrence M.L."/>
        </authorList>
    </citation>
    <scope>NUCLEOTIDE SEQUENCE [LARGE SCALE GENOMIC DNA]</scope>
    <source>
        <strain>93-146</strain>
    </source>
</reference>
<dbReference type="EC" id="2.1.1.45" evidence="1"/>
<dbReference type="EMBL" id="CP001600">
    <property type="protein sequence ID" value="ACR68022.1"/>
    <property type="molecule type" value="Genomic_DNA"/>
</dbReference>
<dbReference type="RefSeq" id="WP_015870215.1">
    <property type="nucleotide sequence ID" value="NZ_CP169062.1"/>
</dbReference>
<dbReference type="SMR" id="C5BH86"/>
<dbReference type="STRING" id="67780.B6E78_14620"/>
<dbReference type="GeneID" id="69537858"/>
<dbReference type="KEGG" id="eic:NT01EI_0801"/>
<dbReference type="PATRIC" id="fig|634503.3.peg.726"/>
<dbReference type="HOGENOM" id="CLU_021669_0_0_6"/>
<dbReference type="OrthoDB" id="9774633at2"/>
<dbReference type="UniPathway" id="UPA00575"/>
<dbReference type="Proteomes" id="UP000001485">
    <property type="component" value="Chromosome"/>
</dbReference>
<dbReference type="GO" id="GO:0005829">
    <property type="term" value="C:cytosol"/>
    <property type="evidence" value="ECO:0007669"/>
    <property type="project" value="TreeGrafter"/>
</dbReference>
<dbReference type="GO" id="GO:0004799">
    <property type="term" value="F:thymidylate synthase activity"/>
    <property type="evidence" value="ECO:0007669"/>
    <property type="project" value="UniProtKB-UniRule"/>
</dbReference>
<dbReference type="GO" id="GO:0006231">
    <property type="term" value="P:dTMP biosynthetic process"/>
    <property type="evidence" value="ECO:0007669"/>
    <property type="project" value="UniProtKB-UniRule"/>
</dbReference>
<dbReference type="GO" id="GO:0006235">
    <property type="term" value="P:dTTP biosynthetic process"/>
    <property type="evidence" value="ECO:0007669"/>
    <property type="project" value="UniProtKB-UniRule"/>
</dbReference>
<dbReference type="GO" id="GO:0032259">
    <property type="term" value="P:methylation"/>
    <property type="evidence" value="ECO:0007669"/>
    <property type="project" value="UniProtKB-KW"/>
</dbReference>
<dbReference type="CDD" id="cd00351">
    <property type="entry name" value="TS_Pyrimidine_HMase"/>
    <property type="match status" value="1"/>
</dbReference>
<dbReference type="FunFam" id="3.30.572.10:FF:000001">
    <property type="entry name" value="Thymidylate synthase"/>
    <property type="match status" value="1"/>
</dbReference>
<dbReference type="Gene3D" id="3.30.572.10">
    <property type="entry name" value="Thymidylate synthase/dCMP hydroxymethylase domain"/>
    <property type="match status" value="1"/>
</dbReference>
<dbReference type="HAMAP" id="MF_00008">
    <property type="entry name" value="Thymidy_synth_bact"/>
    <property type="match status" value="1"/>
</dbReference>
<dbReference type="InterPro" id="IPR045097">
    <property type="entry name" value="Thymidate_synth/dCMP_Mease"/>
</dbReference>
<dbReference type="InterPro" id="IPR023451">
    <property type="entry name" value="Thymidate_synth/dCMP_Mease_dom"/>
</dbReference>
<dbReference type="InterPro" id="IPR036926">
    <property type="entry name" value="Thymidate_synth/dCMP_Mease_sf"/>
</dbReference>
<dbReference type="InterPro" id="IPR000398">
    <property type="entry name" value="Thymidylate_synthase"/>
</dbReference>
<dbReference type="InterPro" id="IPR020940">
    <property type="entry name" value="Thymidylate_synthase_AS"/>
</dbReference>
<dbReference type="NCBIfam" id="NF002497">
    <property type="entry name" value="PRK01827.1-3"/>
    <property type="match status" value="1"/>
</dbReference>
<dbReference type="NCBIfam" id="NF002499">
    <property type="entry name" value="PRK01827.1-5"/>
    <property type="match status" value="1"/>
</dbReference>
<dbReference type="NCBIfam" id="TIGR03284">
    <property type="entry name" value="thym_sym"/>
    <property type="match status" value="2"/>
</dbReference>
<dbReference type="PANTHER" id="PTHR11548:SF9">
    <property type="entry name" value="THYMIDYLATE SYNTHASE"/>
    <property type="match status" value="1"/>
</dbReference>
<dbReference type="PANTHER" id="PTHR11548">
    <property type="entry name" value="THYMIDYLATE SYNTHASE 1"/>
    <property type="match status" value="1"/>
</dbReference>
<dbReference type="Pfam" id="PF00303">
    <property type="entry name" value="Thymidylat_synt"/>
    <property type="match status" value="1"/>
</dbReference>
<dbReference type="PRINTS" id="PR00108">
    <property type="entry name" value="THYMDSNTHASE"/>
</dbReference>
<dbReference type="SUPFAM" id="SSF55831">
    <property type="entry name" value="Thymidylate synthase/dCMP hydroxymethylase"/>
    <property type="match status" value="1"/>
</dbReference>
<dbReference type="PROSITE" id="PS00091">
    <property type="entry name" value="THYMIDYLATE_SYNTHASE"/>
    <property type="match status" value="1"/>
</dbReference>
<comment type="function">
    <text evidence="1">Catalyzes the reductive methylation of 2'-deoxyuridine-5'-monophosphate (dUMP) to 2'-deoxythymidine-5'-monophosphate (dTMP) while utilizing 5,10-methylenetetrahydrofolate (mTHF) as the methyl donor and reductant in the reaction, yielding dihydrofolate (DHF) as a by-product. This enzymatic reaction provides an intracellular de novo source of dTMP, an essential precursor for DNA biosynthesis.</text>
</comment>
<comment type="catalytic activity">
    <reaction evidence="1">
        <text>dUMP + (6R)-5,10-methylene-5,6,7,8-tetrahydrofolate = 7,8-dihydrofolate + dTMP</text>
        <dbReference type="Rhea" id="RHEA:12104"/>
        <dbReference type="ChEBI" id="CHEBI:15636"/>
        <dbReference type="ChEBI" id="CHEBI:57451"/>
        <dbReference type="ChEBI" id="CHEBI:63528"/>
        <dbReference type="ChEBI" id="CHEBI:246422"/>
        <dbReference type="EC" id="2.1.1.45"/>
    </reaction>
</comment>
<comment type="pathway">
    <text evidence="1">Pyrimidine metabolism; dTTP biosynthesis.</text>
</comment>
<comment type="subunit">
    <text evidence="1">Homodimer.</text>
</comment>
<comment type="subcellular location">
    <subcellularLocation>
        <location evidence="1">Cytoplasm</location>
    </subcellularLocation>
</comment>
<comment type="similarity">
    <text evidence="1">Belongs to the thymidylate synthase family. Bacterial-type ThyA subfamily.</text>
</comment>
<accession>C5BH86</accession>
<gene>
    <name evidence="1" type="primary">thyA</name>
    <name type="ordered locus">NT01EI_0801</name>
</gene>
<protein>
    <recommendedName>
        <fullName evidence="1">Thymidylate synthase</fullName>
        <shortName evidence="1">TS</shortName>
        <shortName evidence="1">TSase</shortName>
        <ecNumber evidence="1">2.1.1.45</ecNumber>
    </recommendedName>
</protein>
<name>TYSY_EDWI9</name>
<feature type="chain" id="PRO_1000201718" description="Thymidylate synthase">
    <location>
        <begin position="1"/>
        <end position="264"/>
    </location>
</feature>
<feature type="active site" description="Nucleophile" evidence="1">
    <location>
        <position position="146"/>
    </location>
</feature>
<feature type="binding site" description="in other chain" evidence="1">
    <location>
        <position position="21"/>
    </location>
    <ligand>
        <name>dUMP</name>
        <dbReference type="ChEBI" id="CHEBI:246422"/>
        <note>ligand shared between dimeric partners</note>
    </ligand>
</feature>
<feature type="binding site" evidence="1">
    <location>
        <position position="51"/>
    </location>
    <ligand>
        <name>(6R)-5,10-methylene-5,6,7,8-tetrahydrofolate</name>
        <dbReference type="ChEBI" id="CHEBI:15636"/>
    </ligand>
</feature>
<feature type="binding site" evidence="1">
    <location>
        <begin position="126"/>
        <end position="127"/>
    </location>
    <ligand>
        <name>dUMP</name>
        <dbReference type="ChEBI" id="CHEBI:246422"/>
        <note>ligand shared between dimeric partners</note>
    </ligand>
</feature>
<feature type="binding site" description="in other chain" evidence="1">
    <location>
        <begin position="166"/>
        <end position="169"/>
    </location>
    <ligand>
        <name>dUMP</name>
        <dbReference type="ChEBI" id="CHEBI:246422"/>
        <note>ligand shared between dimeric partners</note>
    </ligand>
</feature>
<feature type="binding site" evidence="1">
    <location>
        <position position="169"/>
    </location>
    <ligand>
        <name>(6R)-5,10-methylene-5,6,7,8-tetrahydrofolate</name>
        <dbReference type="ChEBI" id="CHEBI:15636"/>
    </ligand>
</feature>
<feature type="binding site" description="in other chain" evidence="1">
    <location>
        <position position="177"/>
    </location>
    <ligand>
        <name>dUMP</name>
        <dbReference type="ChEBI" id="CHEBI:246422"/>
        <note>ligand shared between dimeric partners</note>
    </ligand>
</feature>
<feature type="binding site" description="in other chain" evidence="1">
    <location>
        <begin position="207"/>
        <end position="209"/>
    </location>
    <ligand>
        <name>dUMP</name>
        <dbReference type="ChEBI" id="CHEBI:246422"/>
        <note>ligand shared between dimeric partners</note>
    </ligand>
</feature>
<feature type="binding site" evidence="1">
    <location>
        <position position="263"/>
    </location>
    <ligand>
        <name>(6R)-5,10-methylene-5,6,7,8-tetrahydrofolate</name>
        <dbReference type="ChEBI" id="CHEBI:15636"/>
    </ligand>
</feature>
<sequence>MKQYLDLMRKVLAEGTPKADRTGTGTLSIFGHQMRFNLQQGFPLVTTKKCHLRSIIHELLWFLNGETNVSYLHENNVTIWDEWADDNGDLGPVYGKQWRAWGCADGRQVDQISQVMEQLRQEPDSRRIIVSAWNVGELDQMALAPCHAFFQFYVADGRLSCQLYQRSCDVFLGLPFNIASYALLVHMMAQQLDLQVGDFVWTGGDTHLYSNHMEQTALQLTREPRALPRLVLARRPASIFDYRFEDFIIEGYDPHPAIKAPVAV</sequence>
<keyword id="KW-0963">Cytoplasm</keyword>
<keyword id="KW-0489">Methyltransferase</keyword>
<keyword id="KW-0545">Nucleotide biosynthesis</keyword>
<keyword id="KW-0808">Transferase</keyword>
<organism>
    <name type="scientific">Edwardsiella ictaluri (strain 93-146)</name>
    <dbReference type="NCBI Taxonomy" id="634503"/>
    <lineage>
        <taxon>Bacteria</taxon>
        <taxon>Pseudomonadati</taxon>
        <taxon>Pseudomonadota</taxon>
        <taxon>Gammaproteobacteria</taxon>
        <taxon>Enterobacterales</taxon>
        <taxon>Hafniaceae</taxon>
        <taxon>Edwardsiella</taxon>
    </lineage>
</organism>